<accession>Q97CP9</accession>
<organism>
    <name type="scientific">Thermoplasma volcanium (strain ATCC 51530 / DSM 4299 / JCM 9571 / NBRC 15438 / GSS1)</name>
    <dbReference type="NCBI Taxonomy" id="273116"/>
    <lineage>
        <taxon>Archaea</taxon>
        <taxon>Methanobacteriati</taxon>
        <taxon>Thermoplasmatota</taxon>
        <taxon>Thermoplasmata</taxon>
        <taxon>Thermoplasmatales</taxon>
        <taxon>Thermoplasmataceae</taxon>
        <taxon>Thermoplasma</taxon>
    </lineage>
</organism>
<protein>
    <recommendedName>
        <fullName evidence="1">A-type ATP synthase subunit B</fullName>
    </recommendedName>
</protein>
<keyword id="KW-0066">ATP synthesis</keyword>
<keyword id="KW-1003">Cell membrane</keyword>
<keyword id="KW-0375">Hydrogen ion transport</keyword>
<keyword id="KW-0406">Ion transport</keyword>
<keyword id="KW-0472">Membrane</keyword>
<keyword id="KW-0813">Transport</keyword>
<gene>
    <name evidence="1" type="primary">atpB</name>
    <name type="ordered locus">TV0052</name>
    <name type="ORF">TVG0055637</name>
</gene>
<reference key="1">
    <citation type="journal article" date="2000" name="Proc. Natl. Acad. Sci. U.S.A.">
        <title>Archaeal adaptation to higher temperatures revealed by genomic sequence of Thermoplasma volcanium.</title>
        <authorList>
            <person name="Kawashima T."/>
            <person name="Amano N."/>
            <person name="Koike H."/>
            <person name="Makino S."/>
            <person name="Higuchi S."/>
            <person name="Kawashima-Ohya Y."/>
            <person name="Watanabe K."/>
            <person name="Yamazaki M."/>
            <person name="Kanehori K."/>
            <person name="Kawamoto T."/>
            <person name="Nunoshiba T."/>
            <person name="Yamamoto Y."/>
            <person name="Aramaki H."/>
            <person name="Makino K."/>
            <person name="Suzuki M."/>
        </authorList>
    </citation>
    <scope>NUCLEOTIDE SEQUENCE [LARGE SCALE GENOMIC DNA]</scope>
    <source>
        <strain>ATCC 51530 / DSM 4299 / JCM 9571 / NBRC 15438 / GSS1</strain>
    </source>
</reference>
<dbReference type="EMBL" id="BA000011">
    <property type="protein sequence ID" value="BAB59194.1"/>
    <property type="molecule type" value="Genomic_DNA"/>
</dbReference>
<dbReference type="RefSeq" id="WP_010916309.1">
    <property type="nucleotide sequence ID" value="NC_002689.2"/>
</dbReference>
<dbReference type="SMR" id="Q97CP9"/>
<dbReference type="STRING" id="273116.gene:9380817"/>
<dbReference type="PaxDb" id="273116-14324266"/>
<dbReference type="GeneID" id="1441539"/>
<dbReference type="KEGG" id="tvo:TVG0055637"/>
<dbReference type="eggNOG" id="arCOG00865">
    <property type="taxonomic scope" value="Archaea"/>
</dbReference>
<dbReference type="HOGENOM" id="CLU_022916_0_0_2"/>
<dbReference type="OrthoDB" id="32941at2157"/>
<dbReference type="PhylomeDB" id="Q97CP9"/>
<dbReference type="Proteomes" id="UP000001017">
    <property type="component" value="Chromosome"/>
</dbReference>
<dbReference type="GO" id="GO:0005886">
    <property type="term" value="C:plasma membrane"/>
    <property type="evidence" value="ECO:0007669"/>
    <property type="project" value="UniProtKB-SubCell"/>
</dbReference>
<dbReference type="GO" id="GO:0005524">
    <property type="term" value="F:ATP binding"/>
    <property type="evidence" value="ECO:0007669"/>
    <property type="project" value="UniProtKB-UniRule"/>
</dbReference>
<dbReference type="GO" id="GO:0046933">
    <property type="term" value="F:proton-transporting ATP synthase activity, rotational mechanism"/>
    <property type="evidence" value="ECO:0007669"/>
    <property type="project" value="UniProtKB-UniRule"/>
</dbReference>
<dbReference type="GO" id="GO:0042777">
    <property type="term" value="P:proton motive force-driven plasma membrane ATP synthesis"/>
    <property type="evidence" value="ECO:0007669"/>
    <property type="project" value="UniProtKB-UniRule"/>
</dbReference>
<dbReference type="CDD" id="cd18112">
    <property type="entry name" value="ATP-synt_V_A-type_beta_C"/>
    <property type="match status" value="1"/>
</dbReference>
<dbReference type="CDD" id="cd18118">
    <property type="entry name" value="ATP-synt_V_A-type_beta_N"/>
    <property type="match status" value="1"/>
</dbReference>
<dbReference type="CDD" id="cd01135">
    <property type="entry name" value="V_A-ATPase_B"/>
    <property type="match status" value="1"/>
</dbReference>
<dbReference type="Gene3D" id="3.40.50.12240">
    <property type="match status" value="1"/>
</dbReference>
<dbReference type="HAMAP" id="MF_00310">
    <property type="entry name" value="ATP_synth_B_arch"/>
    <property type="match status" value="1"/>
</dbReference>
<dbReference type="InterPro" id="IPR055190">
    <property type="entry name" value="ATP-synt_VA_C"/>
</dbReference>
<dbReference type="InterPro" id="IPR004100">
    <property type="entry name" value="ATPase_F1/V1/A1_a/bsu_N"/>
</dbReference>
<dbReference type="InterPro" id="IPR000194">
    <property type="entry name" value="ATPase_F1/V1/A1_a/bsu_nucl-bd"/>
</dbReference>
<dbReference type="InterPro" id="IPR027417">
    <property type="entry name" value="P-loop_NTPase"/>
</dbReference>
<dbReference type="InterPro" id="IPR022879">
    <property type="entry name" value="V-ATPase_su_B/beta"/>
</dbReference>
<dbReference type="NCBIfam" id="NF003235">
    <property type="entry name" value="PRK04196.1"/>
    <property type="match status" value="1"/>
</dbReference>
<dbReference type="PANTHER" id="PTHR43389">
    <property type="entry name" value="V-TYPE PROTON ATPASE SUBUNIT B"/>
    <property type="match status" value="1"/>
</dbReference>
<dbReference type="PANTHER" id="PTHR43389:SF4">
    <property type="entry name" value="V-TYPE PROTON ATPASE SUBUNIT B"/>
    <property type="match status" value="1"/>
</dbReference>
<dbReference type="Pfam" id="PF00006">
    <property type="entry name" value="ATP-synt_ab"/>
    <property type="match status" value="1"/>
</dbReference>
<dbReference type="Pfam" id="PF02874">
    <property type="entry name" value="ATP-synt_ab_N"/>
    <property type="match status" value="1"/>
</dbReference>
<dbReference type="Pfam" id="PF22919">
    <property type="entry name" value="ATP-synt_VA_C"/>
    <property type="match status" value="1"/>
</dbReference>
<dbReference type="PIRSF" id="PIRSF039114">
    <property type="entry name" value="V-ATPsynth_beta/V-ATPase_B"/>
    <property type="match status" value="1"/>
</dbReference>
<dbReference type="SUPFAM" id="SSF47917">
    <property type="entry name" value="C-terminal domain of alpha and beta subunits of F1 ATP synthase"/>
    <property type="match status" value="1"/>
</dbReference>
<dbReference type="SUPFAM" id="SSF52540">
    <property type="entry name" value="P-loop containing nucleoside triphosphate hydrolases"/>
    <property type="match status" value="1"/>
</dbReference>
<comment type="function">
    <text evidence="1">Component of the A-type ATP synthase that produces ATP from ADP in the presence of a proton gradient across the membrane. The B chain is a regulatory subunit.</text>
</comment>
<comment type="subunit">
    <text evidence="1">Has multiple subunits with at least A(3), B(3), C, D, E, F, H, I and proteolipid K(x).</text>
</comment>
<comment type="subcellular location">
    <subcellularLocation>
        <location evidence="1">Cell membrane</location>
        <topology evidence="1">Peripheral membrane protein</topology>
    </subcellularLocation>
</comment>
<comment type="similarity">
    <text evidence="1">Belongs to the ATPase alpha/beta chains family.</text>
</comment>
<evidence type="ECO:0000255" key="1">
    <source>
        <dbReference type="HAMAP-Rule" id="MF_00310"/>
    </source>
</evidence>
<sequence length="460" mass="51211">MPKLTYKSVSEISGPLLFVENVPNAAYNEMVDIELDNGETRQGQVLDTRKGLAIVQIFGATTGIGTEGTRVKFRGETARLPISEDMLGRVFNGIGEPIDGGPEILAKERMEITSNAINPYSREEPSEFIETGISAIDGMNTLVRGQKLPIFSGSGLPHNQLAAQIARQAKVLDSSENFAVVFGAMGITSEEANYFTNQFRETGALSRSVMFLNLSSDPSMERIILPRIALTTAEYLAFQKEMHILVILTDMTNYCEALREISSAREEVPGRRGYPGYMYTDLSTIYERAGKLKGNNGSITQIPILTMPGDDITHPVPDLTGYITEGQVVVSRDLNRKGIYPGIDVLLSLSRLMNQGIGKGHTREDHRGLADQLYSAYASGKDLRSLTAIVGEEALSQNDRKYLRFADTFEERYLKQDFFEDRSIEDTLNLGWELLADLPESDMKRVKPDHIKKYGKWKKE</sequence>
<feature type="chain" id="PRO_0000144671" description="A-type ATP synthase subunit B">
    <location>
        <begin position="1"/>
        <end position="460"/>
    </location>
</feature>
<name>AATB_THEVO</name>
<proteinExistence type="inferred from homology"/>